<organism>
    <name type="scientific">Pogonomyrmex rugosus</name>
    <name type="common">Desert harvester ant</name>
    <dbReference type="NCBI Taxonomy" id="144042"/>
    <lineage>
        <taxon>Eukaryota</taxon>
        <taxon>Metazoa</taxon>
        <taxon>Ecdysozoa</taxon>
        <taxon>Arthropoda</taxon>
        <taxon>Hexapoda</taxon>
        <taxon>Insecta</taxon>
        <taxon>Pterygota</taxon>
        <taxon>Neoptera</taxon>
        <taxon>Endopterygota</taxon>
        <taxon>Hymenoptera</taxon>
        <taxon>Apocrita</taxon>
        <taxon>Aculeata</taxon>
        <taxon>Formicoidea</taxon>
        <taxon>Formicidae</taxon>
        <taxon>Myrmicinae</taxon>
        <taxon>Pogonomyrmex</taxon>
    </lineage>
</organism>
<evidence type="ECO:0000250" key="1">
    <source>
        <dbReference type="UniProtKB" id="P0DRD6"/>
    </source>
</evidence>
<evidence type="ECO:0000255" key="2"/>
<evidence type="ECO:0000303" key="3">
    <source>
    </source>
</evidence>
<evidence type="ECO:0000305" key="4"/>
<evidence type="ECO:0000305" key="5">
    <source>
    </source>
</evidence>
<keyword id="KW-0528">Neurotoxin</keyword>
<keyword id="KW-0964">Secreted</keyword>
<keyword id="KW-0732">Signal</keyword>
<keyword id="KW-0800">Toxin</keyword>
<accession>P0DXU3</accession>
<comment type="function">
    <text evidence="1">Probable neurotoxin.</text>
</comment>
<comment type="subcellular location">
    <subcellularLocation>
        <location evidence="5">Secreted</location>
    </subcellularLocation>
</comment>
<comment type="tissue specificity">
    <text evidence="5">Expressed by the venom gland.</text>
</comment>
<comment type="similarity">
    <text evidence="4">Belongs to the formicidae venom clade 4 family.</text>
</comment>
<name>TX6B_POGRU</name>
<sequence length="55" mass="6019">MKIIYAFLLIAVVAFMGSGIMAESLAEAIADKPGQAKKIGIFDRITELVNWLVNH</sequence>
<feature type="signal peptide" evidence="2">
    <location>
        <begin position="1"/>
        <end position="22"/>
    </location>
</feature>
<feature type="propeptide" id="PRO_0000461271" evidence="5">
    <location>
        <begin position="23"/>
        <end position="29"/>
    </location>
</feature>
<feature type="peptide" id="PRO_0000461272" description="Myrmicitoxin(1)-Pr6b" evidence="5">
    <location>
        <begin position="30"/>
        <end position="55"/>
    </location>
</feature>
<dbReference type="EMBL" id="OR128482">
    <property type="protein sequence ID" value="WMI02520.1"/>
    <property type="molecule type" value="mRNA"/>
</dbReference>
<dbReference type="GO" id="GO:0005576">
    <property type="term" value="C:extracellular region"/>
    <property type="evidence" value="ECO:0007669"/>
    <property type="project" value="UniProtKB-SubCell"/>
</dbReference>
<dbReference type="GO" id="GO:0090729">
    <property type="term" value="F:toxin activity"/>
    <property type="evidence" value="ECO:0007669"/>
    <property type="project" value="UniProtKB-KW"/>
</dbReference>
<reference key="1">
    <citation type="journal article" date="2024" name="J. Biol. Chem.">
        <title>Peptide toxins that target vertebrate voltage-gated sodium channels underly the painful stings of harvester ants.</title>
        <authorList>
            <person name="Robinson S.D."/>
            <person name="Deuis J.R."/>
            <person name="Niu P."/>
            <person name="Touchard A."/>
            <person name="Mueller A."/>
            <person name="Schendel V."/>
            <person name="Brinkwirth N."/>
            <person name="King G.F."/>
            <person name="Vetter I."/>
            <person name="Schmidt J.O."/>
        </authorList>
    </citation>
    <scope>NUCLEOTIDE SEQUENCE [MRNA]</scope>
    <source>
        <tissue>Venom gland</tissue>
    </source>
</reference>
<protein>
    <recommendedName>
        <fullName evidence="3">Myrmicitoxin(1)-Pr6b</fullName>
        <shortName evidence="3">MYRTX(1)-Pr6b</shortName>
    </recommendedName>
</protein>
<proteinExistence type="inferred from homology"/>